<sequence length="317" mass="34406">MRSYKLIAPAKINLYLEIIGDRPDGYHELVMILQSIDLADEIEIHSLSSETIHVHCNHPQVPTDKSNLVYRAAELMVTRFPEAFTKHGGVDITVHKHIPVAAGLAGGSTNAAAVLVGIDLLWNLGLTQTELEELGSTLGSDVPFCVAGGTVIATGRGEQLSPLPSLDHIYIVLGKYRSLEVSTAWAYKNYRQEYGSTYLRDTNDLASRAAAVHSGSIVKAIVEKDAVAIAQRLHNDLEKVVLPSYPQVLHLRELLASQPGVIGTMMSGSGPSVFALCETQAQAEQVQQQVRQTIPDEDLELFVTRTITHGIQVVGNG</sequence>
<proteinExistence type="inferred from homology"/>
<organism>
    <name type="scientific">Nostoc sp. (strain PCC 7120 / SAG 25.82 / UTEX 2576)</name>
    <dbReference type="NCBI Taxonomy" id="103690"/>
    <lineage>
        <taxon>Bacteria</taxon>
        <taxon>Bacillati</taxon>
        <taxon>Cyanobacteriota</taxon>
        <taxon>Cyanophyceae</taxon>
        <taxon>Nostocales</taxon>
        <taxon>Nostocaceae</taxon>
        <taxon>Nostoc</taxon>
    </lineage>
</organism>
<name>ISPE_NOSS1</name>
<reference key="1">
    <citation type="journal article" date="2001" name="DNA Res.">
        <title>Complete genomic sequence of the filamentous nitrogen-fixing cyanobacterium Anabaena sp. strain PCC 7120.</title>
        <authorList>
            <person name="Kaneko T."/>
            <person name="Nakamura Y."/>
            <person name="Wolk C.P."/>
            <person name="Kuritz T."/>
            <person name="Sasamoto S."/>
            <person name="Watanabe A."/>
            <person name="Iriguchi M."/>
            <person name="Ishikawa A."/>
            <person name="Kawashima K."/>
            <person name="Kimura T."/>
            <person name="Kishida Y."/>
            <person name="Kohara M."/>
            <person name="Matsumoto M."/>
            <person name="Matsuno A."/>
            <person name="Muraki A."/>
            <person name="Nakazaki N."/>
            <person name="Shimpo S."/>
            <person name="Sugimoto M."/>
            <person name="Takazawa M."/>
            <person name="Yamada M."/>
            <person name="Yasuda M."/>
            <person name="Tabata S."/>
        </authorList>
    </citation>
    <scope>NUCLEOTIDE SEQUENCE [LARGE SCALE GENOMIC DNA]</scope>
    <source>
        <strain>PCC 7120 / SAG 25.82 / UTEX 2576</strain>
    </source>
</reference>
<gene>
    <name evidence="1" type="primary">ispE</name>
    <name type="ordered locus">alr3230</name>
</gene>
<comment type="function">
    <text evidence="1">Catalyzes the phosphorylation of the position 2 hydroxy group of 4-diphosphocytidyl-2C-methyl-D-erythritol.</text>
</comment>
<comment type="catalytic activity">
    <reaction evidence="1">
        <text>4-CDP-2-C-methyl-D-erythritol + ATP = 4-CDP-2-C-methyl-D-erythritol 2-phosphate + ADP + H(+)</text>
        <dbReference type="Rhea" id="RHEA:18437"/>
        <dbReference type="ChEBI" id="CHEBI:15378"/>
        <dbReference type="ChEBI" id="CHEBI:30616"/>
        <dbReference type="ChEBI" id="CHEBI:57823"/>
        <dbReference type="ChEBI" id="CHEBI:57919"/>
        <dbReference type="ChEBI" id="CHEBI:456216"/>
        <dbReference type="EC" id="2.7.1.148"/>
    </reaction>
</comment>
<comment type="pathway">
    <text evidence="1">Isoprenoid biosynthesis; isopentenyl diphosphate biosynthesis via DXP pathway; isopentenyl diphosphate from 1-deoxy-D-xylulose 5-phosphate: step 3/6.</text>
</comment>
<comment type="similarity">
    <text evidence="1">Belongs to the GHMP kinase family. IspE subfamily.</text>
</comment>
<protein>
    <recommendedName>
        <fullName evidence="1">4-diphosphocytidyl-2-C-methyl-D-erythritol kinase</fullName>
        <shortName evidence="1">CMK</shortName>
        <ecNumber evidence="1">2.7.1.148</ecNumber>
    </recommendedName>
    <alternativeName>
        <fullName evidence="1">4-(cytidine-5'-diphospho)-2-C-methyl-D-erythritol kinase</fullName>
    </alternativeName>
</protein>
<accession>Q8YS61</accession>
<feature type="chain" id="PRO_0000189182" description="4-diphosphocytidyl-2-C-methyl-D-erythritol kinase">
    <location>
        <begin position="1"/>
        <end position="317"/>
    </location>
</feature>
<feature type="active site" evidence="1">
    <location>
        <position position="11"/>
    </location>
</feature>
<feature type="active site" evidence="1">
    <location>
        <position position="141"/>
    </location>
</feature>
<feature type="binding site" evidence="1">
    <location>
        <begin position="99"/>
        <end position="109"/>
    </location>
    <ligand>
        <name>ATP</name>
        <dbReference type="ChEBI" id="CHEBI:30616"/>
    </ligand>
</feature>
<dbReference type="EC" id="2.7.1.148" evidence="1"/>
<dbReference type="EMBL" id="BA000019">
    <property type="protein sequence ID" value="BAB74929.1"/>
    <property type="molecule type" value="Genomic_DNA"/>
</dbReference>
<dbReference type="PIR" id="AG2209">
    <property type="entry name" value="AG2209"/>
</dbReference>
<dbReference type="RefSeq" id="WP_010997381.1">
    <property type="nucleotide sequence ID" value="NZ_JACJQQ010000002.1"/>
</dbReference>
<dbReference type="SMR" id="Q8YS61"/>
<dbReference type="STRING" id="103690.gene:10495268"/>
<dbReference type="KEGG" id="ana:alr3230"/>
<dbReference type="eggNOG" id="COG1947">
    <property type="taxonomic scope" value="Bacteria"/>
</dbReference>
<dbReference type="OrthoDB" id="9809438at2"/>
<dbReference type="UniPathway" id="UPA00056">
    <property type="reaction ID" value="UER00094"/>
</dbReference>
<dbReference type="Proteomes" id="UP000002483">
    <property type="component" value="Chromosome"/>
</dbReference>
<dbReference type="GO" id="GO:0050515">
    <property type="term" value="F:4-(cytidine 5'-diphospho)-2-C-methyl-D-erythritol kinase activity"/>
    <property type="evidence" value="ECO:0007669"/>
    <property type="project" value="UniProtKB-UniRule"/>
</dbReference>
<dbReference type="GO" id="GO:0005524">
    <property type="term" value="F:ATP binding"/>
    <property type="evidence" value="ECO:0007669"/>
    <property type="project" value="UniProtKB-UniRule"/>
</dbReference>
<dbReference type="GO" id="GO:0019288">
    <property type="term" value="P:isopentenyl diphosphate biosynthetic process, methylerythritol 4-phosphate pathway"/>
    <property type="evidence" value="ECO:0007669"/>
    <property type="project" value="UniProtKB-UniRule"/>
</dbReference>
<dbReference type="GO" id="GO:0016114">
    <property type="term" value="P:terpenoid biosynthetic process"/>
    <property type="evidence" value="ECO:0007669"/>
    <property type="project" value="InterPro"/>
</dbReference>
<dbReference type="Gene3D" id="3.30.230.10">
    <property type="match status" value="1"/>
</dbReference>
<dbReference type="Gene3D" id="3.30.70.890">
    <property type="entry name" value="GHMP kinase, C-terminal domain"/>
    <property type="match status" value="1"/>
</dbReference>
<dbReference type="HAMAP" id="MF_00061">
    <property type="entry name" value="IspE"/>
    <property type="match status" value="1"/>
</dbReference>
<dbReference type="InterPro" id="IPR013750">
    <property type="entry name" value="GHMP_kinase_C_dom"/>
</dbReference>
<dbReference type="InterPro" id="IPR036554">
    <property type="entry name" value="GHMP_kinase_C_sf"/>
</dbReference>
<dbReference type="InterPro" id="IPR006204">
    <property type="entry name" value="GHMP_kinase_N_dom"/>
</dbReference>
<dbReference type="InterPro" id="IPR004424">
    <property type="entry name" value="IspE"/>
</dbReference>
<dbReference type="InterPro" id="IPR020568">
    <property type="entry name" value="Ribosomal_Su5_D2-typ_SF"/>
</dbReference>
<dbReference type="InterPro" id="IPR014721">
    <property type="entry name" value="Ribsml_uS5_D2-typ_fold_subgr"/>
</dbReference>
<dbReference type="NCBIfam" id="TIGR00154">
    <property type="entry name" value="ispE"/>
    <property type="match status" value="1"/>
</dbReference>
<dbReference type="PANTHER" id="PTHR43527">
    <property type="entry name" value="4-DIPHOSPHOCYTIDYL-2-C-METHYL-D-ERYTHRITOL KINASE, CHLOROPLASTIC"/>
    <property type="match status" value="1"/>
</dbReference>
<dbReference type="PANTHER" id="PTHR43527:SF2">
    <property type="entry name" value="4-DIPHOSPHOCYTIDYL-2-C-METHYL-D-ERYTHRITOL KINASE, CHLOROPLASTIC"/>
    <property type="match status" value="1"/>
</dbReference>
<dbReference type="Pfam" id="PF08544">
    <property type="entry name" value="GHMP_kinases_C"/>
    <property type="match status" value="1"/>
</dbReference>
<dbReference type="Pfam" id="PF00288">
    <property type="entry name" value="GHMP_kinases_N"/>
    <property type="match status" value="1"/>
</dbReference>
<dbReference type="PIRSF" id="PIRSF010376">
    <property type="entry name" value="IspE"/>
    <property type="match status" value="1"/>
</dbReference>
<dbReference type="SUPFAM" id="SSF55060">
    <property type="entry name" value="GHMP Kinase, C-terminal domain"/>
    <property type="match status" value="1"/>
</dbReference>
<dbReference type="SUPFAM" id="SSF54211">
    <property type="entry name" value="Ribosomal protein S5 domain 2-like"/>
    <property type="match status" value="1"/>
</dbReference>
<keyword id="KW-0067">ATP-binding</keyword>
<keyword id="KW-0414">Isoprene biosynthesis</keyword>
<keyword id="KW-0418">Kinase</keyword>
<keyword id="KW-0547">Nucleotide-binding</keyword>
<keyword id="KW-1185">Reference proteome</keyword>
<keyword id="KW-0808">Transferase</keyword>
<evidence type="ECO:0000255" key="1">
    <source>
        <dbReference type="HAMAP-Rule" id="MF_00061"/>
    </source>
</evidence>